<sequence>MSVENLKNSLPEYAKDLKLNLSSIARTTVLNEQQLWGTLLATAAATKSASTLKEIASEAADNLSAEAYNAALGAASIMGMNNVFYRTKGYLDGKYDDLRAGLRMNIIGNPGVDKADFELWSLAVSAINGCNHCLEAHENTLRQEGVDREVIFEAIRAGSIVAGVAQAVEANEILSAAQV</sequence>
<reference key="1">
    <citation type="submission" date="2005-03" db="EMBL/GenBank/DDBJ databases">
        <title>Comparison of the complete genome sequences of Rhodococcus erythropolis PR4 and Rhodococcus opacus B4.</title>
        <authorList>
            <person name="Takarada H."/>
            <person name="Sekine M."/>
            <person name="Hosoyama A."/>
            <person name="Yamada R."/>
            <person name="Fujisawa T."/>
            <person name="Omata S."/>
            <person name="Shimizu A."/>
            <person name="Tsukatani N."/>
            <person name="Tanikawa S."/>
            <person name="Fujita N."/>
            <person name="Harayama S."/>
        </authorList>
    </citation>
    <scope>NUCLEOTIDE SEQUENCE [LARGE SCALE GENOMIC DNA]</scope>
    <source>
        <strain>PR4 / NBRC 100887</strain>
    </source>
</reference>
<evidence type="ECO:0000250" key="1"/>
<evidence type="ECO:0000255" key="2">
    <source>
        <dbReference type="HAMAP-Rule" id="MF_01676"/>
    </source>
</evidence>
<dbReference type="EC" id="1.11.1.28" evidence="2"/>
<dbReference type="EMBL" id="AP008957">
    <property type="protein sequence ID" value="BAH33494.1"/>
    <property type="molecule type" value="Genomic_DNA"/>
</dbReference>
<dbReference type="RefSeq" id="WP_003942122.1">
    <property type="nucleotide sequence ID" value="NC_012490.1"/>
</dbReference>
<dbReference type="SMR" id="C0ZYQ9"/>
<dbReference type="KEGG" id="rer:RER_27860"/>
<dbReference type="eggNOG" id="COG0599">
    <property type="taxonomic scope" value="Bacteria"/>
</dbReference>
<dbReference type="HOGENOM" id="CLU_105328_0_0_11"/>
<dbReference type="Proteomes" id="UP000002204">
    <property type="component" value="Chromosome"/>
</dbReference>
<dbReference type="GO" id="GO:0008785">
    <property type="term" value="F:alkyl hydroperoxide reductase activity"/>
    <property type="evidence" value="ECO:0007669"/>
    <property type="project" value="UniProtKB-UniRule"/>
</dbReference>
<dbReference type="GO" id="GO:0015036">
    <property type="term" value="F:disulfide oxidoreductase activity"/>
    <property type="evidence" value="ECO:0007669"/>
    <property type="project" value="TreeGrafter"/>
</dbReference>
<dbReference type="GO" id="GO:0032843">
    <property type="term" value="F:hydroperoxide reductase activity"/>
    <property type="evidence" value="ECO:0007669"/>
    <property type="project" value="InterPro"/>
</dbReference>
<dbReference type="GO" id="GO:0051920">
    <property type="term" value="F:peroxiredoxin activity"/>
    <property type="evidence" value="ECO:0007669"/>
    <property type="project" value="InterPro"/>
</dbReference>
<dbReference type="GO" id="GO:0045454">
    <property type="term" value="P:cell redox homeostasis"/>
    <property type="evidence" value="ECO:0007669"/>
    <property type="project" value="TreeGrafter"/>
</dbReference>
<dbReference type="GO" id="GO:0006979">
    <property type="term" value="P:response to oxidative stress"/>
    <property type="evidence" value="ECO:0007669"/>
    <property type="project" value="InterPro"/>
</dbReference>
<dbReference type="Gene3D" id="1.20.1290.10">
    <property type="entry name" value="AhpD-like"/>
    <property type="match status" value="1"/>
</dbReference>
<dbReference type="HAMAP" id="MF_01676">
    <property type="entry name" value="AhpD"/>
    <property type="match status" value="1"/>
</dbReference>
<dbReference type="InterPro" id="IPR004674">
    <property type="entry name" value="AhpD"/>
</dbReference>
<dbReference type="InterPro" id="IPR029032">
    <property type="entry name" value="AhpD-like"/>
</dbReference>
<dbReference type="InterPro" id="IPR004675">
    <property type="entry name" value="AhpD_core"/>
</dbReference>
<dbReference type="InterPro" id="IPR003779">
    <property type="entry name" value="CMD-like"/>
</dbReference>
<dbReference type="NCBIfam" id="TIGR00777">
    <property type="entry name" value="ahpD"/>
    <property type="match status" value="1"/>
</dbReference>
<dbReference type="NCBIfam" id="TIGR00778">
    <property type="entry name" value="ahpD_dom"/>
    <property type="match status" value="1"/>
</dbReference>
<dbReference type="PANTHER" id="PTHR33930">
    <property type="entry name" value="ALKYL HYDROPEROXIDE REDUCTASE AHPD"/>
    <property type="match status" value="1"/>
</dbReference>
<dbReference type="PANTHER" id="PTHR33930:SF7">
    <property type="entry name" value="ALKYL HYDROPEROXIDE REDUCTASE AHPD"/>
    <property type="match status" value="1"/>
</dbReference>
<dbReference type="Pfam" id="PF02627">
    <property type="entry name" value="CMD"/>
    <property type="match status" value="1"/>
</dbReference>
<dbReference type="SUPFAM" id="SSF69118">
    <property type="entry name" value="AhpD-like"/>
    <property type="match status" value="1"/>
</dbReference>
<accession>C0ZYQ9</accession>
<feature type="chain" id="PRO_1000215889" description="Alkyl hydroperoxide reductase AhpD">
    <location>
        <begin position="1"/>
        <end position="179"/>
    </location>
</feature>
<feature type="active site" description="Proton donor" evidence="2">
    <location>
        <position position="130"/>
    </location>
</feature>
<feature type="active site" description="Cysteine sulfenic acid (-SOH) intermediate" evidence="2">
    <location>
        <position position="133"/>
    </location>
</feature>
<feature type="disulfide bond" evidence="1">
    <location>
        <begin position="130"/>
        <end position="133"/>
    </location>
</feature>
<feature type="disulfide bond" description="Interchain (with AhpC); in linked form" evidence="2">
    <location>
        <position position="133"/>
    </location>
</feature>
<organism>
    <name type="scientific">Rhodococcus erythropolis (strain PR4 / NBRC 100887)</name>
    <dbReference type="NCBI Taxonomy" id="234621"/>
    <lineage>
        <taxon>Bacteria</taxon>
        <taxon>Bacillati</taxon>
        <taxon>Actinomycetota</taxon>
        <taxon>Actinomycetes</taxon>
        <taxon>Mycobacteriales</taxon>
        <taxon>Nocardiaceae</taxon>
        <taxon>Rhodococcus</taxon>
        <taxon>Rhodococcus erythropolis group</taxon>
    </lineage>
</organism>
<proteinExistence type="inferred from homology"/>
<keyword id="KW-0049">Antioxidant</keyword>
<keyword id="KW-1015">Disulfide bond</keyword>
<keyword id="KW-0560">Oxidoreductase</keyword>
<keyword id="KW-0575">Peroxidase</keyword>
<keyword id="KW-0676">Redox-active center</keyword>
<gene>
    <name evidence="2" type="primary">ahpD</name>
    <name type="ordered locus">RER_27860</name>
</gene>
<protein>
    <recommendedName>
        <fullName evidence="2">Alkyl hydroperoxide reductase AhpD</fullName>
        <ecNumber evidence="2">1.11.1.28</ecNumber>
    </recommendedName>
    <alternativeName>
        <fullName evidence="2">Alkylhydroperoxidase AhpD</fullName>
    </alternativeName>
</protein>
<name>AHPD_RHOE4</name>
<comment type="function">
    <text evidence="2">Antioxidant protein with alkyl hydroperoxidase activity. Required for the reduction of the AhpC active site cysteine residues and for the regeneration of the AhpC enzyme activity.</text>
</comment>
<comment type="catalytic activity">
    <reaction evidence="2">
        <text>N(6)-[(R)-dihydrolipoyl]-L-lysyl-[lipoyl-carrier protein] + a hydroperoxide = N(6)-[(R)-lipoyl]-L-lysyl-[lipoyl-carrier protein] + an alcohol + H2O</text>
        <dbReference type="Rhea" id="RHEA:62636"/>
        <dbReference type="Rhea" id="RHEA-COMP:10502"/>
        <dbReference type="Rhea" id="RHEA-COMP:16355"/>
        <dbReference type="ChEBI" id="CHEBI:15377"/>
        <dbReference type="ChEBI" id="CHEBI:30879"/>
        <dbReference type="ChEBI" id="CHEBI:35924"/>
        <dbReference type="ChEBI" id="CHEBI:83099"/>
        <dbReference type="ChEBI" id="CHEBI:83100"/>
        <dbReference type="EC" id="1.11.1.28"/>
    </reaction>
</comment>
<comment type="subunit">
    <text evidence="2">Homotrimer.</text>
</comment>
<comment type="similarity">
    <text evidence="2">Belongs to the AhpD family.</text>
</comment>